<proteinExistence type="evidence at transcript level"/>
<name>CYREN_CRIGR</name>
<keyword id="KW-0007">Acetylation</keyword>
<keyword id="KW-0158">Chromosome</keyword>
<keyword id="KW-0963">Cytoplasm</keyword>
<keyword id="KW-0227">DNA damage</keyword>
<keyword id="KW-0234">DNA repair</keyword>
<keyword id="KW-0539">Nucleus</keyword>
<evidence type="ECO:0000250" key="1">
    <source>
        <dbReference type="UniProtKB" id="Q8BHZ5"/>
    </source>
</evidence>
<evidence type="ECO:0000250" key="2">
    <source>
        <dbReference type="UniProtKB" id="Q9BWK5"/>
    </source>
</evidence>
<evidence type="ECO:0000256" key="3">
    <source>
        <dbReference type="SAM" id="MobiDB-lite"/>
    </source>
</evidence>
<evidence type="ECO:0000269" key="4">
    <source>
    </source>
</evidence>
<evidence type="ECO:0000303" key="5">
    <source>
    </source>
</evidence>
<reference key="1">
    <citation type="journal article" date="2006" name="Proc. Natl. Acad. Sci. U.S.A.">
        <title>Isolation, characterization, and genetic complementation of a cellular mutant resistant to retroviral infection.</title>
        <authorList>
            <person name="Agarwal S."/>
            <person name="Harada J."/>
            <person name="Schreifels J."/>
            <person name="Lech P."/>
            <person name="Nikolai B."/>
            <person name="Yamaguchi T."/>
            <person name="Chanda S.K."/>
            <person name="Somia N.V."/>
        </authorList>
    </citation>
    <scope>NUCLEOTIDE SEQUENCE [MRNA]</scope>
    <scope>FUNCTION</scope>
    <scope>SUBCELLULAR LOCATION</scope>
    <source>
        <tissue>Lung</tissue>
    </source>
</reference>
<accession>Q09HN1</accession>
<dbReference type="EMBL" id="DQ899952">
    <property type="protein sequence ID" value="ABI64109.1"/>
    <property type="molecule type" value="mRNA"/>
</dbReference>
<dbReference type="RefSeq" id="NP_001233721.1">
    <property type="nucleotide sequence ID" value="NM_001246792.1"/>
</dbReference>
<dbReference type="PaxDb" id="10029-NP_001233721.1"/>
<dbReference type="GeneID" id="100689364"/>
<dbReference type="KEGG" id="cge:100689364"/>
<dbReference type="CTD" id="78996"/>
<dbReference type="eggNOG" id="ENOG502SEX2">
    <property type="taxonomic scope" value="Eukaryota"/>
</dbReference>
<dbReference type="OrthoDB" id="8936475at2759"/>
<dbReference type="Proteomes" id="UP000694386">
    <property type="component" value="Unplaced"/>
</dbReference>
<dbReference type="Proteomes" id="UP001108280">
    <property type="component" value="Chromosome 1"/>
</dbReference>
<dbReference type="GO" id="GO:0005737">
    <property type="term" value="C:cytoplasm"/>
    <property type="evidence" value="ECO:0000250"/>
    <property type="project" value="UniProtKB"/>
</dbReference>
<dbReference type="GO" id="GO:0005634">
    <property type="term" value="C:nucleus"/>
    <property type="evidence" value="ECO:0000250"/>
    <property type="project" value="UniProtKB"/>
</dbReference>
<dbReference type="GO" id="GO:0035861">
    <property type="term" value="C:site of double-strand break"/>
    <property type="evidence" value="ECO:0000250"/>
    <property type="project" value="UniProtKB"/>
</dbReference>
<dbReference type="GO" id="GO:0006303">
    <property type="term" value="P:double-strand break repair via nonhomologous end joining"/>
    <property type="evidence" value="ECO:0000250"/>
    <property type="project" value="UniProtKB"/>
</dbReference>
<dbReference type="GO" id="GO:0033152">
    <property type="term" value="P:immunoglobulin V(D)J recombination"/>
    <property type="evidence" value="ECO:0000250"/>
    <property type="project" value="UniProtKB"/>
</dbReference>
<dbReference type="GO" id="GO:2001033">
    <property type="term" value="P:negative regulation of double-strand break repair via nonhomologous end joining"/>
    <property type="evidence" value="ECO:0000250"/>
    <property type="project" value="UniProtKB"/>
</dbReference>
<dbReference type="InterPro" id="IPR028278">
    <property type="entry name" value="MRI"/>
</dbReference>
<dbReference type="PANTHER" id="PTHR14566">
    <property type="entry name" value="CELL CYCLE REGULATOR OF NON-HOMOLOGOUS END JOINING"/>
    <property type="match status" value="1"/>
</dbReference>
<dbReference type="PANTHER" id="PTHR14566:SF0">
    <property type="entry name" value="CELL CYCLE REGULATOR OF NON-HOMOLOGOUS END JOINING"/>
    <property type="match status" value="1"/>
</dbReference>
<dbReference type="Pfam" id="PF15325">
    <property type="entry name" value="MRI"/>
    <property type="match status" value="1"/>
</dbReference>
<sequence>METLKSENKKRVLPSWMTAPVDEKRELSVKTPKRKKIAAGQVGLATRAPVMKTVYCMNEAEMVDVALGILIEGRKQEEPTLVAPDKPQPSPPYSASPHTSSPGSSSEKEDSGNRWPALGLSPSHGPEAADSPCSRSPEEEEEDALKYVREIFFS</sequence>
<comment type="function">
    <text evidence="1 2 4">Cell-cycle-specific regulator of classical non-homologous end joining (NHEJ) of DNA double-strand break (DSB) repair, which can act both as an activator or inhibitor of NHEJ, depending on the cell cycle phase (By similarity). Acts as a regulator of DNA repair pathway choice by specifically inhibiting classical NHEJ during the S and G2 phases, thereby promoting error-free repair by homologous recombination during cell cycle phases when sister chromatids are present. Preferentially protects single-stranded overhangs at break sites by inhibiting classical NHEJ, thereby creating a local environment that favors homologous recombination. Acts via interaction with XRCC5/Ku80 and XRCC6/Ku70 (By similarity). In contrast, acts as an activator of NHEJ during G1 phase of the cell cycle: promotes classical NHEJ in G1 phase cells via multivalent interactions that increase the affinity of DNA damage response proteins for DSB-associated chromatin. Also involved in immunoglobulin V(D)J recombination (By similarity). May act as a regulator of proteasome (PubMed:17043244). In case of infection by a retrovirus, may regulate the proteasome during the uncoating phase of retrovirus (PubMed:17043244).</text>
</comment>
<comment type="subunit">
    <text evidence="1 2">Interacts (via KBM motif) with XRCC5/Ku80 and XRCC6/Ku70 heterodimer. Interacts (via XLF motif) with TRIM28/KAP1, ATM, MRE11, NBN and RAD50. Interacts with splicing factor SF3B1 (By similarity). Interacts with ERCC6L2; this interaction is DNA independent (By similarity).</text>
</comment>
<comment type="subcellular location">
    <subcellularLocation>
        <location evidence="4">Cytoplasm</location>
    </subcellularLocation>
    <subcellularLocation>
        <location evidence="2">Nucleus</location>
    </subcellularLocation>
    <subcellularLocation>
        <location evidence="1">Chromosome</location>
    </subcellularLocation>
    <text evidence="1 2">Nuclear localization may depend upon interaction with XRCC5/Ku80 and XRCC6/Ku70 heterodimer (By similarity). Localizes to DNA damage sites (By similarity).</text>
</comment>
<comment type="domain">
    <text evidence="1">The KBM (Ku-binding motif) mediates interaction with XRCC5/Ku80 and XRCC6/Ku70 and recruitment to DNA damage sites.</text>
</comment>
<comment type="domain">
    <text evidence="1">The XLM (XLF-like motif) mediates interaction with DNA damage response proteins TRIM28/KAP1, ATM and members of the MRN complex (MRE11, NBN and RAD50).</text>
</comment>
<protein>
    <recommendedName>
        <fullName evidence="2">Cell cycle regulator of non-homologous end joining</fullName>
        <shortName evidence="2">Cell cycle regulator of NHEJ</shortName>
    </recommendedName>
    <alternativeName>
        <fullName evidence="5">Modulator of retrovirus infection</fullName>
    </alternativeName>
</protein>
<organism>
    <name type="scientific">Cricetulus griseus</name>
    <name type="common">Chinese hamster</name>
    <name type="synonym">Cricetulus barabensis griseus</name>
    <dbReference type="NCBI Taxonomy" id="10029"/>
    <lineage>
        <taxon>Eukaryota</taxon>
        <taxon>Metazoa</taxon>
        <taxon>Chordata</taxon>
        <taxon>Craniata</taxon>
        <taxon>Vertebrata</taxon>
        <taxon>Euteleostomi</taxon>
        <taxon>Mammalia</taxon>
        <taxon>Eutheria</taxon>
        <taxon>Euarchontoglires</taxon>
        <taxon>Glires</taxon>
        <taxon>Rodentia</taxon>
        <taxon>Myomorpha</taxon>
        <taxon>Muroidea</taxon>
        <taxon>Cricetidae</taxon>
        <taxon>Cricetinae</taxon>
        <taxon>Cricetulus</taxon>
    </lineage>
</organism>
<gene>
    <name evidence="2" type="primary">CYREN</name>
    <name evidence="5" type="synonym">MRI</name>
</gene>
<feature type="chain" id="PRO_0000320947" description="Cell cycle regulator of non-homologous end joining">
    <location>
        <begin position="1"/>
        <end position="154"/>
    </location>
</feature>
<feature type="region of interest" description="Disordered" evidence="3">
    <location>
        <begin position="77"/>
        <end position="144"/>
    </location>
</feature>
<feature type="short sequence motif" description="KBM" evidence="2">
    <location>
        <begin position="1"/>
        <end position="21"/>
    </location>
</feature>
<feature type="short sequence motif" description="XLM" evidence="2">
    <location>
        <begin position="144"/>
        <end position="154"/>
    </location>
</feature>
<feature type="compositionally biased region" description="Low complexity" evidence="3">
    <location>
        <begin position="95"/>
        <end position="105"/>
    </location>
</feature>
<feature type="modified residue" description="N-acetylmethionine" evidence="2">
    <location>
        <position position="1"/>
    </location>
</feature>